<name>1002L_ASFM2</name>
<comment type="function">
    <text evidence="1">Plays a role in virus cell tropism, and may be required for efficient virus replication in macrophages.</text>
</comment>
<comment type="induction">
    <text evidence="2">Expressed in the early phase of the viral replicative cycle.</text>
</comment>
<comment type="similarity">
    <text evidence="2">Belongs to the asfivirus MGF 100 family.</text>
</comment>
<dbReference type="EMBL" id="AY261361">
    <property type="status" value="NOT_ANNOTATED_CDS"/>
    <property type="molecule type" value="Genomic_DNA"/>
</dbReference>
<dbReference type="SMR" id="P0C9F5"/>
<dbReference type="Proteomes" id="UP000000860">
    <property type="component" value="Segment"/>
</dbReference>
<organism>
    <name type="scientific">African swine fever virus (isolate Tick/Malawi/Lil 20-1/1983)</name>
    <name type="common">ASFV</name>
    <dbReference type="NCBI Taxonomy" id="10500"/>
    <lineage>
        <taxon>Viruses</taxon>
        <taxon>Varidnaviria</taxon>
        <taxon>Bamfordvirae</taxon>
        <taxon>Nucleocytoviricota</taxon>
        <taxon>Pokkesviricetes</taxon>
        <taxon>Asfuvirales</taxon>
        <taxon>Asfarviridae</taxon>
        <taxon>Asfivirus</taxon>
        <taxon>African swine fever virus</taxon>
    </lineage>
</organism>
<accession>P0C9F5</accession>
<organismHost>
    <name type="scientific">Ornithodoros</name>
    <name type="common">relapsing fever ticks</name>
    <dbReference type="NCBI Taxonomy" id="6937"/>
</organismHost>
<organismHost>
    <name type="scientific">Phacochoerus aethiopicus</name>
    <name type="common">Warthog</name>
    <dbReference type="NCBI Taxonomy" id="85517"/>
</organismHost>
<organismHost>
    <name type="scientific">Phacochoerus africanus</name>
    <name type="common">Warthog</name>
    <dbReference type="NCBI Taxonomy" id="41426"/>
</organismHost>
<organismHost>
    <name type="scientific">Potamochoerus larvatus</name>
    <name type="common">Bushpig</name>
    <dbReference type="NCBI Taxonomy" id="273792"/>
</organismHost>
<organismHost>
    <name type="scientific">Sus scrofa</name>
    <name type="common">Pig</name>
    <dbReference type="NCBI Taxonomy" id="9823"/>
</organismHost>
<proteinExistence type="inferred from homology"/>
<feature type="chain" id="PRO_0000373176" description="Protein MGF 100-2L">
    <location>
        <begin position="1"/>
        <end position="141"/>
    </location>
</feature>
<reference key="1">
    <citation type="submission" date="2003-03" db="EMBL/GenBank/DDBJ databases">
        <title>African swine fever virus genomes.</title>
        <authorList>
            <person name="Kutish G.F."/>
            <person name="Rock D.L."/>
        </authorList>
    </citation>
    <scope>NUCLEOTIDE SEQUENCE [LARGE SCALE GENOMIC DNA]</scope>
</reference>
<gene>
    <name type="ordered locus">Mal-158</name>
</gene>
<sequence>MGNKESKYLEMCSDEAWLNIPNVFKCIFIRKLFYNKWLKYQEKKLEKRLRLLSFYHAKKDFIGIRDMLQTAPGGSYFITDNITEEFLMLVLKHPEDGSAEFTKLCLKGSCIMIDGYYYDNLDIFLAESPDLYKYPLIRYDR</sequence>
<protein>
    <recommendedName>
        <fullName>Protein MGF 100-2L</fullName>
    </recommendedName>
</protein>
<keyword id="KW-0244">Early protein</keyword>
<evidence type="ECO:0000250" key="1"/>
<evidence type="ECO:0000305" key="2"/>